<reference key="1">
    <citation type="journal article" date="2003" name="Appl. Environ. Microbiol.">
        <title>Tri1 encodes the cytochrome P450 monooxygenase for C-8 hydroxylation during trichothecene biosynthesis in Fusarium sporotrichioides and resides upstream of another new Tri gene.</title>
        <authorList>
            <person name="Meek I.B."/>
            <person name="Peplow A.W."/>
            <person name="Ake C. Jr."/>
            <person name="Phillips T.D."/>
            <person name="Beremand M.N."/>
        </authorList>
    </citation>
    <scope>NUCLEOTIDE SEQUENCE [GENOMIC DNA]</scope>
    <scope>FUNCTION</scope>
    <scope>DISRUPTION PHENOTYPE</scope>
    <scope>INDUCTION</scope>
    <scope>PATHWAY</scope>
    <source>
        <strain>ATCC 24631 / NRRL 3299</strain>
    </source>
</reference>
<reference key="2">
    <citation type="journal article" date="2003" name="J. Agric. Food Chem.">
        <title>Characterization of a fusarium 2-gene cluster involved in trichothecene C-8 modification.</title>
        <authorList>
            <person name="Brown D.W."/>
            <person name="Proctor R.H."/>
            <person name="Dyer R.B."/>
            <person name="Plattner R.D."/>
        </authorList>
    </citation>
    <scope>FUNCTION</scope>
    <source>
        <strain>ATCC 24631 / NRRL 3299</strain>
    </source>
</reference>
<reference key="3">
    <citation type="journal article" date="1996" name="Appl. Environ. Microbiol.">
        <title>Isolation and characterization of Tri3, a gene encoding 15-O-acetyltransferase from Fusarium sporotrichioides.</title>
        <authorList>
            <person name="McCormick S.P."/>
            <person name="Hohn T.M."/>
            <person name="Desjardins A.E."/>
        </authorList>
    </citation>
    <scope>FUNCTION</scope>
</reference>
<reference key="4">
    <citation type="journal article" date="2001" name="Fungal Genet. Biol.">
        <title>A genetic and biochemical approach to study trichothecene diversity in Fusarium sporotrichioides and Fusarium graminearum.</title>
        <authorList>
            <person name="Brown D.W."/>
            <person name="McCormick S.P."/>
            <person name="Alexander N.J."/>
            <person name="Proctor R.H."/>
            <person name="Desjardins A.E."/>
        </authorList>
    </citation>
    <scope>NUCLEOTIDE SEQUENCE [GENOMIC DNA]</scope>
    <scope>FUNCTION</scope>
</reference>
<reference key="5">
    <citation type="journal article" date="1986" name="Arch. Biochem. Biophys.">
        <title>Purification and characterization of the sesquiterpene cyclase trichodiene synthetase from Fusarium sporotrichioides.</title>
        <authorList>
            <person name="Hohn T.M."/>
            <person name="Vanmiddlesworth F."/>
        </authorList>
    </citation>
    <scope>FUNCTION</scope>
</reference>
<reference key="6">
    <citation type="journal article" date="1990" name="Appl. Environ. Microbiol.">
        <title>Bioconversion of possible T-2 toxin precursors by a mutant strain of Fusarium sporotrichioides NRRL 3299.</title>
        <authorList>
            <person name="McCormick S.P."/>
            <person name="Taylor S.L."/>
            <person name="Plattner R.D."/>
            <person name="Beremand M.N."/>
        </authorList>
    </citation>
    <scope>FUNCTION</scope>
</reference>
<reference key="7">
    <citation type="journal article" date="1995" name="Mol. Gen. Genet.">
        <title>The Tri4 gene of Fusarium sporotrichioides encodes a cytochrome P450 monooxygenase involved in trichothecene biosynthesis.</title>
        <authorList>
            <person name="Hohn T.M."/>
            <person name="Desjardins A.E."/>
            <person name="McCormick S.P."/>
        </authorList>
    </citation>
    <scope>FUNCTION</scope>
</reference>
<reference key="8">
    <citation type="journal article" date="1998" name="Appl. Environ. Microbiol.">
        <title>The TRI11 gene of Fusarium sporotrichioides encodes a cytochrome P-450 monooxygenase required for C-15 hydroxylation in trichothecene biosynthesis.</title>
        <authorList>
            <person name="Alexander N.J."/>
            <person name="Hohn T.M."/>
            <person name="McCormick S.P."/>
        </authorList>
    </citation>
    <scope>FUNCTION</scope>
</reference>
<reference key="9">
    <citation type="journal article" date="1999" name="Appl. Environ. Microbiol.">
        <title>Disruption of TRI101, the gene encoding trichothecene 3-O-acetyltransferase, from Fusarium sporotrichioides.</title>
        <authorList>
            <person name="McCormick S.P."/>
            <person name="Alexander N.J."/>
            <person name="Trapp S.E."/>
            <person name="Hohn T.M."/>
        </authorList>
    </citation>
    <scope>FUNCTION</scope>
</reference>
<reference key="10">
    <citation type="journal article" date="2002" name="Appl. Environ. Microbiol.">
        <title>Fusarium Tri8 encodes a trichothecene C-3 esterase.</title>
        <authorList>
            <person name="McCormick S.P."/>
            <person name="Alexander N.J."/>
        </authorList>
    </citation>
    <scope>FUNCTION</scope>
</reference>
<reference key="11">
    <citation type="journal article" date="2002" name="Fungal Genet. Biol.">
        <title>Inactivation of a cytochrome P-450 is a determinant of trichothecene diversity in Fusarium species.</title>
        <authorList>
            <person name="Brown D.W."/>
            <person name="McCormick S.P."/>
            <person name="Alexander N.J."/>
            <person name="Proctor R.H."/>
            <person name="Desjardins A.E."/>
        </authorList>
    </citation>
    <scope>FUNCTION</scope>
</reference>
<reference key="12">
    <citation type="journal article" date="2003" name="Appl. Environ. Microbiol.">
        <title>Identification of new genes positively regulated by Tri10 and a regulatory network for trichothecene mycotoxin production.</title>
        <authorList>
            <person name="Peplow A.W."/>
            <person name="Tag A.G."/>
            <person name="Garifullina G.F."/>
            <person name="Beremand M.N."/>
        </authorList>
    </citation>
    <scope>INDUCTION</scope>
</reference>
<reference key="13">
    <citation type="journal article" date="2003" name="Appl. Environ. Microbiol.">
        <title>Tri16 is required for esterification of position C-8 during trichothecene mycotoxin production by Fusarium sporotrichioides.</title>
        <authorList>
            <person name="Peplow A.W."/>
            <person name="Meek I.B."/>
            <person name="Wiles M.C."/>
            <person name="Phillips T.D."/>
            <person name="Beremand M.N."/>
        </authorList>
    </citation>
    <scope>FUNCTION</scope>
</reference>
<reference key="14">
    <citation type="journal article" date="2006" name="Can. J. Microbiol.">
        <title>Fusarium Tri4 encodes a multifunctional oxygenase required for trichothecene biosynthesis.</title>
        <authorList>
            <person name="McCormick S.P."/>
            <person name="Alexander N.J."/>
            <person name="Proctor R.H."/>
        </authorList>
    </citation>
    <scope>FUNCTION</scope>
</reference>
<feature type="chain" id="PRO_0000442365" description="Cytochrome P450 monooxygenase TRI1">
    <location>
        <begin position="1"/>
        <end position="542"/>
    </location>
</feature>
<feature type="transmembrane region" description="Helical" evidence="2">
    <location>
        <begin position="37"/>
        <end position="54"/>
    </location>
</feature>
<feature type="binding site" description="axial binding residue" evidence="1">
    <location>
        <position position="469"/>
    </location>
    <ligand>
        <name>heme</name>
        <dbReference type="ChEBI" id="CHEBI:30413"/>
    </ligand>
    <ligandPart>
        <name>Fe</name>
        <dbReference type="ChEBI" id="CHEBI:18248"/>
    </ligandPart>
</feature>
<feature type="glycosylation site" description="N-linked (GlcNAc...) asparagine" evidence="3">
    <location>
        <position position="167"/>
    </location>
</feature>
<feature type="glycosylation site" description="N-linked (GlcNAc...) asparagine" evidence="3">
    <location>
        <position position="297"/>
    </location>
</feature>
<feature type="glycosylation site" description="N-linked (GlcNAc...) asparagine" evidence="3">
    <location>
        <position position="428"/>
    </location>
</feature>
<keyword id="KW-0325">Glycoprotein</keyword>
<keyword id="KW-0349">Heme</keyword>
<keyword id="KW-0408">Iron</keyword>
<keyword id="KW-0472">Membrane</keyword>
<keyword id="KW-0479">Metal-binding</keyword>
<keyword id="KW-0503">Monooxygenase</keyword>
<keyword id="KW-0560">Oxidoreductase</keyword>
<keyword id="KW-0812">Transmembrane</keyword>
<keyword id="KW-1133">Transmembrane helix</keyword>
<gene>
    <name evidence="17" type="primary">TRI1</name>
    <name evidence="17" type="synonym">TOX1</name>
</gene>
<sequence>MSKVDKTGYAQWVYLLPERSSMMSFIDSMEDFRFDMLIYFLCFVVLGRAVQWFLRPKPNAPLLNPRRFFEFSDSRAVSEILYSTRQVLEDWFSKYPTKPMRIIADLGQITILPPSMADEIKNDPRLSFIKASTESAFHITIPGFEPFREGAKNEAGLIKNVLHKHLNKTLNHITTPLAEETCLAVQEYFGSDQGWHKVPLRDTLVPLVTRISTRIFLGQDLCRNQEWLRIAASYSSTSAEVANHLRRWPKPLRYLVSLLSPECQNLAKQVRNARALINPILERRRVEEGQEKGTSYNDSLEWFERYAREAYDPAATQLFLSVVSIHTTTDLLCQALEDISSHPEIIKPLQHEIREVLKQEGWNTKALYKMKLLDSVLKESQRLKPVQHATMLRLALEDITLEDGTFIPKGHQISVSCHAMRDNEIYENASSWDGYRYYRQREQSANEHKAQLSSTSPEHMGFGYGIHVCPGRFFAANEVKVIMIYLLLQYEWRTPPGSQPKPLSWCTTWATDPTFELEVRRKGSDDIPVELSHNTFSRESES</sequence>
<name>TRI1_FUSSP</name>
<protein>
    <recommendedName>
        <fullName evidence="18">Cytochrome P450 monooxygenase TRI1</fullName>
        <ecNumber evidence="8">1.-.-.-</ecNumber>
    </recommendedName>
    <alternativeName>
        <fullName>Trichothecene biosynthesis protein 1</fullName>
    </alternativeName>
</protein>
<evidence type="ECO:0000250" key="1">
    <source>
        <dbReference type="UniProtKB" id="P04798"/>
    </source>
</evidence>
<evidence type="ECO:0000255" key="2"/>
<evidence type="ECO:0000255" key="3">
    <source>
        <dbReference type="PROSITE-ProRule" id="PRU00498"/>
    </source>
</evidence>
<evidence type="ECO:0000269" key="4">
    <source>
    </source>
</evidence>
<evidence type="ECO:0000269" key="5">
    <source>
    </source>
</evidence>
<evidence type="ECO:0000269" key="6">
    <source>
    </source>
</evidence>
<evidence type="ECO:0000269" key="7">
    <source>
    </source>
</evidence>
<evidence type="ECO:0000269" key="8">
    <source>
    </source>
</evidence>
<evidence type="ECO:0000269" key="9">
    <source>
    </source>
</evidence>
<evidence type="ECO:0000269" key="10">
    <source>
    </source>
</evidence>
<evidence type="ECO:0000269" key="11">
    <source>
    </source>
</evidence>
<evidence type="ECO:0000269" key="12">
    <source>
    </source>
</evidence>
<evidence type="ECO:0000269" key="13">
    <source>
    </source>
</evidence>
<evidence type="ECO:0000269" key="14">
    <source>
    </source>
</evidence>
<evidence type="ECO:0000269" key="15">
    <source>
    </source>
</evidence>
<evidence type="ECO:0000269" key="16">
    <source>
    </source>
</evidence>
<evidence type="ECO:0000303" key="17">
    <source>
    </source>
</evidence>
<evidence type="ECO:0000303" key="18">
    <source>
    </source>
</evidence>
<evidence type="ECO:0000305" key="19"/>
<dbReference type="EC" id="1.-.-.-" evidence="8"/>
<dbReference type="EMBL" id="AY040587">
    <property type="protein sequence ID" value="AAK77224.1"/>
    <property type="molecule type" value="Genomic_DNA"/>
</dbReference>
<dbReference type="SMR" id="Q8J127"/>
<dbReference type="GlyCosmos" id="Q8J127">
    <property type="glycosylation" value="3 sites, No reported glycans"/>
</dbReference>
<dbReference type="BioCyc" id="MetaCyc:MONOMER-19554"/>
<dbReference type="UniPathway" id="UPA00267"/>
<dbReference type="GO" id="GO:0016020">
    <property type="term" value="C:membrane"/>
    <property type="evidence" value="ECO:0007669"/>
    <property type="project" value="UniProtKB-SubCell"/>
</dbReference>
<dbReference type="GO" id="GO:0020037">
    <property type="term" value="F:heme binding"/>
    <property type="evidence" value="ECO:0007669"/>
    <property type="project" value="InterPro"/>
</dbReference>
<dbReference type="GO" id="GO:0005506">
    <property type="term" value="F:iron ion binding"/>
    <property type="evidence" value="ECO:0007669"/>
    <property type="project" value="InterPro"/>
</dbReference>
<dbReference type="GO" id="GO:0004497">
    <property type="term" value="F:monooxygenase activity"/>
    <property type="evidence" value="ECO:0007669"/>
    <property type="project" value="UniProtKB-KW"/>
</dbReference>
<dbReference type="GO" id="GO:0016705">
    <property type="term" value="F:oxidoreductase activity, acting on paired donors, with incorporation or reduction of molecular oxygen"/>
    <property type="evidence" value="ECO:0007669"/>
    <property type="project" value="InterPro"/>
</dbReference>
<dbReference type="GO" id="GO:0019748">
    <property type="term" value="P:secondary metabolic process"/>
    <property type="evidence" value="ECO:0007669"/>
    <property type="project" value="UniProtKB-ARBA"/>
</dbReference>
<dbReference type="CDD" id="cd11041">
    <property type="entry name" value="CYP503A1-like"/>
    <property type="match status" value="1"/>
</dbReference>
<dbReference type="Gene3D" id="1.10.630.10">
    <property type="entry name" value="Cytochrome P450"/>
    <property type="match status" value="1"/>
</dbReference>
<dbReference type="InterPro" id="IPR001128">
    <property type="entry name" value="Cyt_P450"/>
</dbReference>
<dbReference type="InterPro" id="IPR017972">
    <property type="entry name" value="Cyt_P450_CS"/>
</dbReference>
<dbReference type="InterPro" id="IPR002403">
    <property type="entry name" value="Cyt_P450_E_grp-IV"/>
</dbReference>
<dbReference type="InterPro" id="IPR036396">
    <property type="entry name" value="Cyt_P450_sf"/>
</dbReference>
<dbReference type="PANTHER" id="PTHR46206">
    <property type="entry name" value="CYTOCHROME P450"/>
    <property type="match status" value="1"/>
</dbReference>
<dbReference type="PANTHER" id="PTHR46206:SF2">
    <property type="entry name" value="CYTOCHROME P450 MONOOXYGENASE AUSG-RELATED"/>
    <property type="match status" value="1"/>
</dbReference>
<dbReference type="Pfam" id="PF00067">
    <property type="entry name" value="p450"/>
    <property type="match status" value="1"/>
</dbReference>
<dbReference type="PRINTS" id="PR00465">
    <property type="entry name" value="EP450IV"/>
</dbReference>
<dbReference type="PRINTS" id="PR00385">
    <property type="entry name" value="P450"/>
</dbReference>
<dbReference type="SUPFAM" id="SSF48264">
    <property type="entry name" value="Cytochrome P450"/>
    <property type="match status" value="1"/>
</dbReference>
<dbReference type="PROSITE" id="PS00086">
    <property type="entry name" value="CYTOCHROME_P450"/>
    <property type="match status" value="1"/>
</dbReference>
<proteinExistence type="evidence at transcript level"/>
<accession>Q8J127</accession>
<organism>
    <name type="scientific">Fusarium sporotrichioides</name>
    <dbReference type="NCBI Taxonomy" id="5514"/>
    <lineage>
        <taxon>Eukaryota</taxon>
        <taxon>Fungi</taxon>
        <taxon>Dikarya</taxon>
        <taxon>Ascomycota</taxon>
        <taxon>Pezizomycotina</taxon>
        <taxon>Sordariomycetes</taxon>
        <taxon>Hypocreomycetidae</taxon>
        <taxon>Hypocreales</taxon>
        <taxon>Nectriaceae</taxon>
        <taxon>Fusarium</taxon>
    </lineage>
</organism>
<comment type="function">
    <text evidence="4 5 6 7 8 9 10 11 12 13 14 15 16">Cytochrome P450 monooxygenase; part of 2-gene cluster involved in trichothecene C-8 modification that mediates the biosynthesis of T2-toxin (PubMed:12620849, PubMed:14690377). The biosynthesis of trichothecenes begins with the cyclization of farnesyl diphosphate to trichodiene and is catalyzed by the trichodiene synthase TRI5 (PubMed:3800398). Trichodiene undergoes a series of oxygenations catalyzed by the cytochrome P450 monooxygenase TRI4 (PubMed:7651333). TRI4 controls the addition of four oxygens at C-2, C-3, C-11, and the C-12, C-13-epoxide to form the intermediate isotrichotriol (PubMed:16917519). Isotrichotriol then undergoes a non-enzymatic isomerization and cyclization to form isotrichodermol (PubMed:2317042). During this process, the oxygen at the C-2 position becomes the pyran ring oxygen and the hydroxyl group at C-11 is lost (PubMed:2317042). More complex type A trichothecenes are built by modifying isotrichodermol through a series of paired hydroxylation and acetylation or acylation steps (PubMed:11352533). Isotrichodermol is converted to isotrichodermin by the acetyltransferase TRI101 (PubMed:10583973). TRI101 encodes a C-3 transacetylase that acts as a self-protection or resistance factor during biosynthesis and that the presence of a free C-3 hydroxyl group is a key component of Fusarium trichothecene phytotoxicity (PubMed:10583973). A second hydroxyl group is added to C-15 by the trichothecene C-15 hydroxylase TRI11, producing 15-decalonectrin, which is then acetylated by TRI3, producing calonectrin (PubMed:8593041, PubMed:9435078). A third hydroxyl group is added at C-4 by the cytochrome P450 monooxygenase TRI13, converting calonectrin to 3,15-diacetoxyspirpenol, which is subsequently acetylated by the acetyltransferase TRI7 (PubMed:11352533, PubMed:12135578). A fourth hydroxyl group is added to C-8 by the cytochrome P450 monooxygenase TRI1, followed by the addition of an isovaleryl moiety by TRI16 (PubMed:12620849, PubMed:14532047). Finally, the acetyl group is removed from the C-3 position by the trichothecene C-3 esterase TRI8 to produce T-2 toxin (PubMed:12039755).</text>
</comment>
<comment type="cofactor">
    <cofactor evidence="1">
        <name>heme</name>
        <dbReference type="ChEBI" id="CHEBI:30413"/>
    </cofactor>
</comment>
<comment type="pathway">
    <text evidence="8">Sesquiterpene biosynthesis; trichothecene biosynthesis.</text>
</comment>
<comment type="subcellular location">
    <subcellularLocation>
        <location evidence="2">Membrane</location>
        <topology evidence="2">Single-pass membrane protein</topology>
    </subcellularLocation>
</comment>
<comment type="induction">
    <text evidence="8">Expression is positively regulated by the TRI6 and TRI10 core trichothecenes biosynthesis gene cluster transcription factor (PubMed:12620849).</text>
</comment>
<comment type="disruption phenotype">
    <text evidence="8">Impairs the production of T-2 toxin and results in 4,15-diacetoxyscirpenol (DAS) accumulation (PubMed:12620849).</text>
</comment>
<comment type="miscellaneous">
    <text evidence="19">Trichothecenes are sesquiterpenoid toxins that act by inhibiting protein biosynthesis.</text>
</comment>
<comment type="similarity">
    <text evidence="19">Belongs to the cytochrome P450 family.</text>
</comment>